<keyword id="KW-0066">ATP synthesis</keyword>
<keyword id="KW-1003">Cell membrane</keyword>
<keyword id="KW-0139">CF(1)</keyword>
<keyword id="KW-0375">Hydrogen ion transport</keyword>
<keyword id="KW-0406">Ion transport</keyword>
<keyword id="KW-0472">Membrane</keyword>
<keyword id="KW-0813">Transport</keyword>
<dbReference type="EMBL" id="CP001033">
    <property type="protein sequence ID" value="ACB90747.1"/>
    <property type="molecule type" value="Genomic_DNA"/>
</dbReference>
<dbReference type="RefSeq" id="WP_000359036.1">
    <property type="nucleotide sequence ID" value="NC_010582.1"/>
</dbReference>
<dbReference type="SMR" id="B2IQX3"/>
<dbReference type="KEGG" id="spw:SPCG_1495"/>
<dbReference type="HOGENOM" id="CLU_085114_1_2_9"/>
<dbReference type="GO" id="GO:0005886">
    <property type="term" value="C:plasma membrane"/>
    <property type="evidence" value="ECO:0007669"/>
    <property type="project" value="UniProtKB-SubCell"/>
</dbReference>
<dbReference type="GO" id="GO:0045259">
    <property type="term" value="C:proton-transporting ATP synthase complex"/>
    <property type="evidence" value="ECO:0007669"/>
    <property type="project" value="UniProtKB-KW"/>
</dbReference>
<dbReference type="GO" id="GO:0046933">
    <property type="term" value="F:proton-transporting ATP synthase activity, rotational mechanism"/>
    <property type="evidence" value="ECO:0007669"/>
    <property type="project" value="UniProtKB-UniRule"/>
</dbReference>
<dbReference type="Gene3D" id="1.10.520.20">
    <property type="entry name" value="N-terminal domain of the delta subunit of the F1F0-ATP synthase"/>
    <property type="match status" value="1"/>
</dbReference>
<dbReference type="HAMAP" id="MF_01416">
    <property type="entry name" value="ATP_synth_delta_bact"/>
    <property type="match status" value="1"/>
</dbReference>
<dbReference type="InterPro" id="IPR026015">
    <property type="entry name" value="ATP_synth_OSCP/delta_N_sf"/>
</dbReference>
<dbReference type="InterPro" id="IPR000711">
    <property type="entry name" value="ATPase_OSCP/dsu"/>
</dbReference>
<dbReference type="NCBIfam" id="TIGR01145">
    <property type="entry name" value="ATP_synt_delta"/>
    <property type="match status" value="1"/>
</dbReference>
<dbReference type="NCBIfam" id="NF004401">
    <property type="entry name" value="PRK05758.2-1"/>
    <property type="match status" value="1"/>
</dbReference>
<dbReference type="PANTHER" id="PTHR11910">
    <property type="entry name" value="ATP SYNTHASE DELTA CHAIN"/>
    <property type="match status" value="1"/>
</dbReference>
<dbReference type="Pfam" id="PF00213">
    <property type="entry name" value="OSCP"/>
    <property type="match status" value="1"/>
</dbReference>
<dbReference type="PRINTS" id="PR00125">
    <property type="entry name" value="ATPASEDELTA"/>
</dbReference>
<dbReference type="SUPFAM" id="SSF47928">
    <property type="entry name" value="N-terminal domain of the delta subunit of the F1F0-ATP synthase"/>
    <property type="match status" value="1"/>
</dbReference>
<protein>
    <recommendedName>
        <fullName evidence="1">ATP synthase subunit delta</fullName>
    </recommendedName>
    <alternativeName>
        <fullName evidence="1">ATP synthase F(1) sector subunit delta</fullName>
    </alternativeName>
    <alternativeName>
        <fullName evidence="1">F-type ATPase subunit delta</fullName>
        <shortName evidence="1">F-ATPase subunit delta</shortName>
    </alternativeName>
</protein>
<reference key="1">
    <citation type="journal article" date="2009" name="BMC Genomics">
        <title>Genome evolution driven by host adaptations results in a more virulent and antimicrobial-resistant Streptococcus pneumoniae serotype 14.</title>
        <authorList>
            <person name="Ding F."/>
            <person name="Tang P."/>
            <person name="Hsu M.-H."/>
            <person name="Cui P."/>
            <person name="Hu S."/>
            <person name="Yu J."/>
            <person name="Chiu C.-H."/>
        </authorList>
    </citation>
    <scope>NUCLEOTIDE SEQUENCE [LARGE SCALE GENOMIC DNA]</scope>
    <source>
        <strain>CGSP14</strain>
    </source>
</reference>
<evidence type="ECO:0000255" key="1">
    <source>
        <dbReference type="HAMAP-Rule" id="MF_01416"/>
    </source>
</evidence>
<accession>B2IQX3</accession>
<gene>
    <name evidence="1" type="primary">atpH</name>
    <name type="ordered locus">SPCG_1495</name>
</gene>
<comment type="function">
    <text evidence="1">F(1)F(0) ATP synthase produces ATP from ADP in the presence of a proton or sodium gradient. F-type ATPases consist of two structural domains, F(1) containing the extramembraneous catalytic core and F(0) containing the membrane proton channel, linked together by a central stalk and a peripheral stalk. During catalysis, ATP synthesis in the catalytic domain of F(1) is coupled via a rotary mechanism of the central stalk subunits to proton translocation.</text>
</comment>
<comment type="function">
    <text evidence="1">This protein is part of the stalk that links CF(0) to CF(1). It either transmits conformational changes from CF(0) to CF(1) or is implicated in proton conduction.</text>
</comment>
<comment type="subunit">
    <text evidence="1">F-type ATPases have 2 components, F(1) - the catalytic core - and F(0) - the membrane proton channel. F(1) has five subunits: alpha(3), beta(3), gamma(1), delta(1), epsilon(1). F(0) has three main subunits: a(1), b(2) and c(10-14). The alpha and beta chains form an alternating ring which encloses part of the gamma chain. F(1) is attached to F(0) by a central stalk formed by the gamma and epsilon chains, while a peripheral stalk is formed by the delta and b chains.</text>
</comment>
<comment type="subcellular location">
    <subcellularLocation>
        <location evidence="1">Cell membrane</location>
        <topology evidence="1">Peripheral membrane protein</topology>
    </subcellularLocation>
</comment>
<comment type="similarity">
    <text evidence="1">Belongs to the ATPase delta chain family.</text>
</comment>
<sequence length="178" mass="20541">MDKKTVKVIEKYSMPFVQLVLEKGEEDRIFSDLTQIKQVVEKTGLPSFLKQVAVDESDKEKTIAFFQDSVSPLLQNFIQVLAYNHRANLFYDVLVDCLNRLEKETNRFEVTITSAHPLTDEQKTRLLPLIEKKMSLKVRSVKEQIDESLIGGFVIFANHKTIDVSIKQQLKVVKENLK</sequence>
<name>ATPD_STRPS</name>
<organism>
    <name type="scientific">Streptococcus pneumoniae (strain CGSP14)</name>
    <dbReference type="NCBI Taxonomy" id="516950"/>
    <lineage>
        <taxon>Bacteria</taxon>
        <taxon>Bacillati</taxon>
        <taxon>Bacillota</taxon>
        <taxon>Bacilli</taxon>
        <taxon>Lactobacillales</taxon>
        <taxon>Streptococcaceae</taxon>
        <taxon>Streptococcus</taxon>
    </lineage>
</organism>
<feature type="chain" id="PRO_0000371153" description="ATP synthase subunit delta">
    <location>
        <begin position="1"/>
        <end position="178"/>
    </location>
</feature>
<proteinExistence type="inferred from homology"/>